<evidence type="ECO:0000250" key="1"/>
<evidence type="ECO:0000256" key="2">
    <source>
        <dbReference type="SAM" id="MobiDB-lite"/>
    </source>
</evidence>
<evidence type="ECO:0000305" key="3"/>
<comment type="function">
    <text evidence="1">Part of a checkpoint which monitors spindle integrity and prevents premature exit from mitosis.</text>
</comment>
<comment type="subcellular location">
    <subcellularLocation>
        <location evidence="1">Cytoplasm</location>
        <location evidence="1">Cytoskeleton</location>
        <location evidence="1">Spindle pole</location>
    </subcellularLocation>
</comment>
<comment type="similarity">
    <text evidence="3">Belongs to the IBD2 family.</text>
</comment>
<organism>
    <name type="scientific">Eremothecium gossypii (strain ATCC 10895 / CBS 109.51 / FGSC 9923 / NRRL Y-1056)</name>
    <name type="common">Yeast</name>
    <name type="synonym">Ashbya gossypii</name>
    <dbReference type="NCBI Taxonomy" id="284811"/>
    <lineage>
        <taxon>Eukaryota</taxon>
        <taxon>Fungi</taxon>
        <taxon>Dikarya</taxon>
        <taxon>Ascomycota</taxon>
        <taxon>Saccharomycotina</taxon>
        <taxon>Saccharomycetes</taxon>
        <taxon>Saccharomycetales</taxon>
        <taxon>Saccharomycetaceae</taxon>
        <taxon>Eremothecium</taxon>
    </lineage>
</organism>
<gene>
    <name type="primary">IBD2</name>
    <name type="ordered locus">AFR030C</name>
</gene>
<reference key="1">
    <citation type="journal article" date="2004" name="Science">
        <title>The Ashbya gossypii genome as a tool for mapping the ancient Saccharomyces cerevisiae genome.</title>
        <authorList>
            <person name="Dietrich F.S."/>
            <person name="Voegeli S."/>
            <person name="Brachat S."/>
            <person name="Lerch A."/>
            <person name="Gates K."/>
            <person name="Steiner S."/>
            <person name="Mohr C."/>
            <person name="Poehlmann R."/>
            <person name="Luedi P."/>
            <person name="Choi S."/>
            <person name="Wing R.A."/>
            <person name="Flavier A."/>
            <person name="Gaffney T.D."/>
            <person name="Philippsen P."/>
        </authorList>
    </citation>
    <scope>NUCLEOTIDE SEQUENCE [LARGE SCALE GENOMIC DNA]</scope>
    <source>
        <strain>ATCC 10895 / CBS 109.51 / FGSC 9923 / NRRL Y-1056</strain>
    </source>
</reference>
<reference key="2">
    <citation type="journal article" date="2013" name="G3 (Bethesda)">
        <title>Genomes of Ashbya fungi isolated from insects reveal four mating-type loci, numerous translocations, lack of transposons, and distinct gene duplications.</title>
        <authorList>
            <person name="Dietrich F.S."/>
            <person name="Voegeli S."/>
            <person name="Kuo S."/>
            <person name="Philippsen P."/>
        </authorList>
    </citation>
    <scope>GENOME REANNOTATION</scope>
    <source>
        <strain>ATCC 10895 / CBS 109.51 / FGSC 9923 / NRRL Y-1056</strain>
    </source>
</reference>
<feature type="chain" id="PRO_0000333334" description="Protein IBD2">
    <location>
        <begin position="1"/>
        <end position="344"/>
    </location>
</feature>
<feature type="region of interest" description="Disordered" evidence="2">
    <location>
        <begin position="71"/>
        <end position="115"/>
    </location>
</feature>
<feature type="region of interest" description="Disordered" evidence="2">
    <location>
        <begin position="234"/>
        <end position="255"/>
    </location>
</feature>
<feature type="region of interest" description="Disordered" evidence="2">
    <location>
        <begin position="310"/>
        <end position="344"/>
    </location>
</feature>
<feature type="compositionally biased region" description="Low complexity" evidence="2">
    <location>
        <begin position="319"/>
        <end position="330"/>
    </location>
</feature>
<feature type="compositionally biased region" description="Basic residues" evidence="2">
    <location>
        <begin position="331"/>
        <end position="344"/>
    </location>
</feature>
<name>IBD2_EREGS</name>
<dbReference type="EMBL" id="AE016819">
    <property type="protein sequence ID" value="AAS53401.1"/>
    <property type="molecule type" value="Genomic_DNA"/>
</dbReference>
<dbReference type="RefSeq" id="NP_985577.1">
    <property type="nucleotide sequence ID" value="NM_210931.1"/>
</dbReference>
<dbReference type="FunCoup" id="Q754P2">
    <property type="interactions" value="34"/>
</dbReference>
<dbReference type="EnsemblFungi" id="AAS53401">
    <property type="protein sequence ID" value="AAS53401"/>
    <property type="gene ID" value="AGOS_AFR030C"/>
</dbReference>
<dbReference type="GeneID" id="4621817"/>
<dbReference type="KEGG" id="ago:AGOS_AFR030C"/>
<dbReference type="eggNOG" id="ENOG502RXXW">
    <property type="taxonomic scope" value="Eukaryota"/>
</dbReference>
<dbReference type="HOGENOM" id="CLU_067888_0_0_1"/>
<dbReference type="InParanoid" id="Q754P2"/>
<dbReference type="OMA" id="PKNMIKW"/>
<dbReference type="OrthoDB" id="4057723at2759"/>
<dbReference type="Proteomes" id="UP000000591">
    <property type="component" value="Chromosome VI"/>
</dbReference>
<dbReference type="GO" id="GO:0005737">
    <property type="term" value="C:cytoplasm"/>
    <property type="evidence" value="ECO:0007669"/>
    <property type="project" value="UniProtKB-KW"/>
</dbReference>
<dbReference type="GO" id="GO:0000922">
    <property type="term" value="C:spindle pole"/>
    <property type="evidence" value="ECO:0007669"/>
    <property type="project" value="UniProtKB-SubCell"/>
</dbReference>
<dbReference type="GO" id="GO:0051301">
    <property type="term" value="P:cell division"/>
    <property type="evidence" value="ECO:0007669"/>
    <property type="project" value="UniProtKB-KW"/>
</dbReference>
<dbReference type="GO" id="GO:0007094">
    <property type="term" value="P:mitotic spindle assembly checkpoint signaling"/>
    <property type="evidence" value="ECO:0007669"/>
    <property type="project" value="InterPro"/>
</dbReference>
<dbReference type="InterPro" id="IPR026231">
    <property type="entry name" value="IBD2"/>
</dbReference>
<dbReference type="PRINTS" id="PR02099">
    <property type="entry name" value="PROTEINIBD2"/>
</dbReference>
<proteinExistence type="inferred from homology"/>
<sequence length="344" mass="38183">MSEPERASIEFVSESDSIDFGIMMKKGVKALTDILANHLQHDPEWKNERSMKFVFKNQNGELQPVLNRTARLEDEGVGPSPDDGQVVDGEETASEQDKLAEANCSDGSSTGDLQLDDPESEVLFDYSLDHLPNISYTPDPTIGKHVMEMIESLLPKGAPYREKVLNTMKNNVQGAGMSTAGTAAVETIQHTAGSTISEPAMSYECDRDLGIAESDDWEHQQFAQPHHGTLEADTVAEGHHRCQSRSSESQHAGHQRAGQEYLYECKPKARPDFHALTMFDPLEQPLCMFCEYYLVFGEPPRQMIKWYNKYGSSSGGPSAGSQQGNKGWNGNKKKKKKKGKKGKR</sequence>
<keyword id="KW-0131">Cell cycle</keyword>
<keyword id="KW-0132">Cell division</keyword>
<keyword id="KW-0963">Cytoplasm</keyword>
<keyword id="KW-0206">Cytoskeleton</keyword>
<keyword id="KW-0498">Mitosis</keyword>
<keyword id="KW-1185">Reference proteome</keyword>
<accession>Q754P2</accession>
<protein>
    <recommendedName>
        <fullName>Protein IBD2</fullName>
    </recommendedName>
</protein>